<dbReference type="EC" id="2.5.1.78" evidence="1"/>
<dbReference type="EMBL" id="BX640421">
    <property type="protein sequence ID" value="CAE43746.1"/>
    <property type="molecule type" value="Genomic_DNA"/>
</dbReference>
<dbReference type="RefSeq" id="NP_882004.1">
    <property type="nucleotide sequence ID" value="NC_002929.2"/>
</dbReference>
<dbReference type="RefSeq" id="WP_010931502.1">
    <property type="nucleotide sequence ID" value="NZ_CP039022.1"/>
</dbReference>
<dbReference type="SMR" id="Q7VTN4"/>
<dbReference type="STRING" id="257313.BP3485"/>
<dbReference type="PaxDb" id="257313-BP3485"/>
<dbReference type="GeneID" id="69600516"/>
<dbReference type="KEGG" id="bpe:BP3485"/>
<dbReference type="PATRIC" id="fig|257313.5.peg.3773"/>
<dbReference type="eggNOG" id="COG0054">
    <property type="taxonomic scope" value="Bacteria"/>
</dbReference>
<dbReference type="HOGENOM" id="CLU_089358_1_2_4"/>
<dbReference type="UniPathway" id="UPA00275">
    <property type="reaction ID" value="UER00404"/>
</dbReference>
<dbReference type="Proteomes" id="UP000002676">
    <property type="component" value="Chromosome"/>
</dbReference>
<dbReference type="GO" id="GO:0005829">
    <property type="term" value="C:cytosol"/>
    <property type="evidence" value="ECO:0007669"/>
    <property type="project" value="TreeGrafter"/>
</dbReference>
<dbReference type="GO" id="GO:0009349">
    <property type="term" value="C:riboflavin synthase complex"/>
    <property type="evidence" value="ECO:0007669"/>
    <property type="project" value="InterPro"/>
</dbReference>
<dbReference type="GO" id="GO:0000906">
    <property type="term" value="F:6,7-dimethyl-8-ribityllumazine synthase activity"/>
    <property type="evidence" value="ECO:0007669"/>
    <property type="project" value="UniProtKB-UniRule"/>
</dbReference>
<dbReference type="GO" id="GO:0009231">
    <property type="term" value="P:riboflavin biosynthetic process"/>
    <property type="evidence" value="ECO:0007669"/>
    <property type="project" value="UniProtKB-UniRule"/>
</dbReference>
<dbReference type="CDD" id="cd09209">
    <property type="entry name" value="Lumazine_synthase-I"/>
    <property type="match status" value="1"/>
</dbReference>
<dbReference type="Gene3D" id="3.40.50.960">
    <property type="entry name" value="Lumazine/riboflavin synthase"/>
    <property type="match status" value="1"/>
</dbReference>
<dbReference type="HAMAP" id="MF_00178">
    <property type="entry name" value="Lumazine_synth"/>
    <property type="match status" value="1"/>
</dbReference>
<dbReference type="InterPro" id="IPR034964">
    <property type="entry name" value="LS"/>
</dbReference>
<dbReference type="InterPro" id="IPR002180">
    <property type="entry name" value="LS/RS"/>
</dbReference>
<dbReference type="InterPro" id="IPR036467">
    <property type="entry name" value="LS/RS_sf"/>
</dbReference>
<dbReference type="NCBIfam" id="TIGR00114">
    <property type="entry name" value="lumazine-synth"/>
    <property type="match status" value="1"/>
</dbReference>
<dbReference type="PANTHER" id="PTHR21058:SF0">
    <property type="entry name" value="6,7-DIMETHYL-8-RIBITYLLUMAZINE SYNTHASE"/>
    <property type="match status" value="1"/>
</dbReference>
<dbReference type="PANTHER" id="PTHR21058">
    <property type="entry name" value="6,7-DIMETHYL-8-RIBITYLLUMAZINE SYNTHASE DMRL SYNTHASE LUMAZINE SYNTHASE"/>
    <property type="match status" value="1"/>
</dbReference>
<dbReference type="Pfam" id="PF00885">
    <property type="entry name" value="DMRL_synthase"/>
    <property type="match status" value="1"/>
</dbReference>
<dbReference type="SUPFAM" id="SSF52121">
    <property type="entry name" value="Lumazine synthase"/>
    <property type="match status" value="1"/>
</dbReference>
<organism>
    <name type="scientific">Bordetella pertussis (strain Tohama I / ATCC BAA-589 / NCTC 13251)</name>
    <dbReference type="NCBI Taxonomy" id="257313"/>
    <lineage>
        <taxon>Bacteria</taxon>
        <taxon>Pseudomonadati</taxon>
        <taxon>Pseudomonadota</taxon>
        <taxon>Betaproteobacteria</taxon>
        <taxon>Burkholderiales</taxon>
        <taxon>Alcaligenaceae</taxon>
        <taxon>Bordetella</taxon>
    </lineage>
</organism>
<comment type="function">
    <text evidence="1">Catalyzes the formation of 6,7-dimethyl-8-ribityllumazine by condensation of 5-amino-6-(D-ribitylamino)uracil with 3,4-dihydroxy-2-butanone 4-phosphate. This is the penultimate step in the biosynthesis of riboflavin.</text>
</comment>
<comment type="catalytic activity">
    <reaction evidence="1">
        <text>(2S)-2-hydroxy-3-oxobutyl phosphate + 5-amino-6-(D-ribitylamino)uracil = 6,7-dimethyl-8-(1-D-ribityl)lumazine + phosphate + 2 H2O + H(+)</text>
        <dbReference type="Rhea" id="RHEA:26152"/>
        <dbReference type="ChEBI" id="CHEBI:15377"/>
        <dbReference type="ChEBI" id="CHEBI:15378"/>
        <dbReference type="ChEBI" id="CHEBI:15934"/>
        <dbReference type="ChEBI" id="CHEBI:43474"/>
        <dbReference type="ChEBI" id="CHEBI:58201"/>
        <dbReference type="ChEBI" id="CHEBI:58830"/>
        <dbReference type="EC" id="2.5.1.78"/>
    </reaction>
</comment>
<comment type="pathway">
    <text evidence="1">Cofactor biosynthesis; riboflavin biosynthesis; riboflavin from 2-hydroxy-3-oxobutyl phosphate and 5-amino-6-(D-ribitylamino)uracil: step 1/2.</text>
</comment>
<comment type="similarity">
    <text evidence="1">Belongs to the DMRL synthase family.</text>
</comment>
<reference key="1">
    <citation type="journal article" date="2003" name="Nat. Genet.">
        <title>Comparative analysis of the genome sequences of Bordetella pertussis, Bordetella parapertussis and Bordetella bronchiseptica.</title>
        <authorList>
            <person name="Parkhill J."/>
            <person name="Sebaihia M."/>
            <person name="Preston A."/>
            <person name="Murphy L.D."/>
            <person name="Thomson N.R."/>
            <person name="Harris D.E."/>
            <person name="Holden M.T.G."/>
            <person name="Churcher C.M."/>
            <person name="Bentley S.D."/>
            <person name="Mungall K.L."/>
            <person name="Cerdeno-Tarraga A.-M."/>
            <person name="Temple L."/>
            <person name="James K.D."/>
            <person name="Harris B."/>
            <person name="Quail M.A."/>
            <person name="Achtman M."/>
            <person name="Atkin R."/>
            <person name="Baker S."/>
            <person name="Basham D."/>
            <person name="Bason N."/>
            <person name="Cherevach I."/>
            <person name="Chillingworth T."/>
            <person name="Collins M."/>
            <person name="Cronin A."/>
            <person name="Davis P."/>
            <person name="Doggett J."/>
            <person name="Feltwell T."/>
            <person name="Goble A."/>
            <person name="Hamlin N."/>
            <person name="Hauser H."/>
            <person name="Holroyd S."/>
            <person name="Jagels K."/>
            <person name="Leather S."/>
            <person name="Moule S."/>
            <person name="Norberczak H."/>
            <person name="O'Neil S."/>
            <person name="Ormond D."/>
            <person name="Price C."/>
            <person name="Rabbinowitsch E."/>
            <person name="Rutter S."/>
            <person name="Sanders M."/>
            <person name="Saunders D."/>
            <person name="Seeger K."/>
            <person name="Sharp S."/>
            <person name="Simmonds M."/>
            <person name="Skelton J."/>
            <person name="Squares R."/>
            <person name="Squares S."/>
            <person name="Stevens K."/>
            <person name="Unwin L."/>
            <person name="Whitehead S."/>
            <person name="Barrell B.G."/>
            <person name="Maskell D.J."/>
        </authorList>
    </citation>
    <scope>NUCLEOTIDE SEQUENCE [LARGE SCALE GENOMIC DNA]</scope>
    <source>
        <strain>Tohama I / ATCC BAA-589 / NCTC 13251</strain>
    </source>
</reference>
<evidence type="ECO:0000255" key="1">
    <source>
        <dbReference type="HAMAP-Rule" id="MF_00178"/>
    </source>
</evidence>
<evidence type="ECO:0000256" key="2">
    <source>
        <dbReference type="SAM" id="MobiDB-lite"/>
    </source>
</evidence>
<proteinExistence type="inferred from homology"/>
<name>RISB_BORPE</name>
<accession>Q7VTN4</accession>
<feature type="chain" id="PRO_0000134721" description="6,7-dimethyl-8-ribityllumazine synthase">
    <location>
        <begin position="1"/>
        <end position="173"/>
    </location>
</feature>
<feature type="region of interest" description="Disordered" evidence="2">
    <location>
        <begin position="150"/>
        <end position="173"/>
    </location>
</feature>
<feature type="compositionally biased region" description="Acidic residues" evidence="2">
    <location>
        <begin position="152"/>
        <end position="173"/>
    </location>
</feature>
<feature type="active site" description="Proton donor" evidence="1">
    <location>
        <position position="90"/>
    </location>
</feature>
<feature type="binding site" evidence="1">
    <location>
        <position position="24"/>
    </location>
    <ligand>
        <name>5-amino-6-(D-ribitylamino)uracil</name>
        <dbReference type="ChEBI" id="CHEBI:15934"/>
    </ligand>
</feature>
<feature type="binding site" evidence="1">
    <location>
        <begin position="58"/>
        <end position="60"/>
    </location>
    <ligand>
        <name>5-amino-6-(D-ribitylamino)uracil</name>
        <dbReference type="ChEBI" id="CHEBI:15934"/>
    </ligand>
</feature>
<feature type="binding site" evidence="1">
    <location>
        <begin position="82"/>
        <end position="84"/>
    </location>
    <ligand>
        <name>5-amino-6-(D-ribitylamino)uracil</name>
        <dbReference type="ChEBI" id="CHEBI:15934"/>
    </ligand>
</feature>
<feature type="binding site" evidence="1">
    <location>
        <begin position="87"/>
        <end position="88"/>
    </location>
    <ligand>
        <name>(2S)-2-hydroxy-3-oxobutyl phosphate</name>
        <dbReference type="ChEBI" id="CHEBI:58830"/>
    </ligand>
</feature>
<feature type="binding site" evidence="1">
    <location>
        <position position="115"/>
    </location>
    <ligand>
        <name>5-amino-6-(D-ribitylamino)uracil</name>
        <dbReference type="ChEBI" id="CHEBI:15934"/>
    </ligand>
</feature>
<feature type="binding site" evidence="1">
    <location>
        <position position="129"/>
    </location>
    <ligand>
        <name>(2S)-2-hydroxy-3-oxobutyl phosphate</name>
        <dbReference type="ChEBI" id="CHEBI:58830"/>
    </ligand>
</feature>
<sequence length="173" mass="18433">MNPYILTPDLNGEGLHIGIVRARFNEEIGQAQLQACLEELGKLGVDERDVMVVSVPGALELGVALARMAESYEFDALIALGAVIRGETYHFEVVSNESAAAISRIALETGIPVANGVLTVDTDEQAQARAAGKGADCAQVAVEMANLAAALEPEEDDEDDEDEDFDDEEDDGR</sequence>
<protein>
    <recommendedName>
        <fullName evidence="1">6,7-dimethyl-8-ribityllumazine synthase</fullName>
        <shortName evidence="1">DMRL synthase</shortName>
        <shortName evidence="1">LS</shortName>
        <shortName evidence="1">Lumazine synthase</shortName>
        <ecNumber evidence="1">2.5.1.78</ecNumber>
    </recommendedName>
</protein>
<gene>
    <name evidence="1" type="primary">ribH</name>
    <name type="ordered locus">BP3485</name>
</gene>
<keyword id="KW-1185">Reference proteome</keyword>
<keyword id="KW-0686">Riboflavin biosynthesis</keyword>
<keyword id="KW-0808">Transferase</keyword>